<evidence type="ECO:0000255" key="1">
    <source>
        <dbReference type="HAMAP-Rule" id="MF_00362"/>
    </source>
</evidence>
<evidence type="ECO:0000305" key="2"/>
<gene>
    <name evidence="1" type="primary">rplJ</name>
    <name type="ordered locus">cauri_0364</name>
</gene>
<comment type="function">
    <text evidence="1">Forms part of the ribosomal stalk, playing a central role in the interaction of the ribosome with GTP-bound translation factors.</text>
</comment>
<comment type="subunit">
    <text evidence="1">Part of the ribosomal stalk of the 50S ribosomal subunit. The N-terminus interacts with L11 and the large rRNA to form the base of the stalk. The C-terminus forms an elongated spine to which L12 dimers bind in a sequential fashion forming a multimeric L10(L12)X complex.</text>
</comment>
<comment type="similarity">
    <text evidence="1">Belongs to the universal ribosomal protein uL10 family.</text>
</comment>
<accession>C3PKM7</accession>
<dbReference type="EMBL" id="CP001601">
    <property type="protein sequence ID" value="ACP31963.1"/>
    <property type="molecule type" value="Genomic_DNA"/>
</dbReference>
<dbReference type="RefSeq" id="WP_010189711.1">
    <property type="nucleotide sequence ID" value="NZ_ACLH01000069.1"/>
</dbReference>
<dbReference type="SMR" id="C3PKM7"/>
<dbReference type="STRING" id="548476.cauri_0364"/>
<dbReference type="GeneID" id="31922984"/>
<dbReference type="KEGG" id="car:cauri_0364"/>
<dbReference type="eggNOG" id="COG0244">
    <property type="taxonomic scope" value="Bacteria"/>
</dbReference>
<dbReference type="HOGENOM" id="CLU_092227_1_0_11"/>
<dbReference type="OrthoDB" id="3186107at2"/>
<dbReference type="Proteomes" id="UP000002077">
    <property type="component" value="Chromosome"/>
</dbReference>
<dbReference type="GO" id="GO:0015934">
    <property type="term" value="C:large ribosomal subunit"/>
    <property type="evidence" value="ECO:0007669"/>
    <property type="project" value="InterPro"/>
</dbReference>
<dbReference type="GO" id="GO:0070180">
    <property type="term" value="F:large ribosomal subunit rRNA binding"/>
    <property type="evidence" value="ECO:0007669"/>
    <property type="project" value="UniProtKB-UniRule"/>
</dbReference>
<dbReference type="GO" id="GO:0003735">
    <property type="term" value="F:structural constituent of ribosome"/>
    <property type="evidence" value="ECO:0007669"/>
    <property type="project" value="InterPro"/>
</dbReference>
<dbReference type="GO" id="GO:0006412">
    <property type="term" value="P:translation"/>
    <property type="evidence" value="ECO:0007669"/>
    <property type="project" value="UniProtKB-UniRule"/>
</dbReference>
<dbReference type="CDD" id="cd05797">
    <property type="entry name" value="Ribosomal_L10"/>
    <property type="match status" value="1"/>
</dbReference>
<dbReference type="Gene3D" id="3.30.70.1730">
    <property type="match status" value="1"/>
</dbReference>
<dbReference type="Gene3D" id="6.10.250.290">
    <property type="match status" value="1"/>
</dbReference>
<dbReference type="HAMAP" id="MF_00362">
    <property type="entry name" value="Ribosomal_uL10"/>
    <property type="match status" value="1"/>
</dbReference>
<dbReference type="InterPro" id="IPR001790">
    <property type="entry name" value="Ribosomal_uL10"/>
</dbReference>
<dbReference type="InterPro" id="IPR043141">
    <property type="entry name" value="Ribosomal_uL10-like_sf"/>
</dbReference>
<dbReference type="InterPro" id="IPR022973">
    <property type="entry name" value="Ribosomal_uL10_bac"/>
</dbReference>
<dbReference type="InterPro" id="IPR047865">
    <property type="entry name" value="Ribosomal_uL10_bac_type"/>
</dbReference>
<dbReference type="InterPro" id="IPR002363">
    <property type="entry name" value="Ribosomal_uL10_CS_bac"/>
</dbReference>
<dbReference type="NCBIfam" id="NF000955">
    <property type="entry name" value="PRK00099.1-1"/>
    <property type="match status" value="1"/>
</dbReference>
<dbReference type="PANTHER" id="PTHR11560">
    <property type="entry name" value="39S RIBOSOMAL PROTEIN L10, MITOCHONDRIAL"/>
    <property type="match status" value="1"/>
</dbReference>
<dbReference type="Pfam" id="PF00466">
    <property type="entry name" value="Ribosomal_L10"/>
    <property type="match status" value="1"/>
</dbReference>
<dbReference type="SUPFAM" id="SSF160369">
    <property type="entry name" value="Ribosomal protein L10-like"/>
    <property type="match status" value="1"/>
</dbReference>
<dbReference type="PROSITE" id="PS01109">
    <property type="entry name" value="RIBOSOMAL_L10"/>
    <property type="match status" value="1"/>
</dbReference>
<name>RL10_CORA7</name>
<sequence length="173" mass="18110">MANPKNTADLAALKEKLEGANSIVLTEYRGLTVGQLQELRNNLGFDVEYSVAKNTLFKIAANEAGIEGLDEHLTGPTAIAFIKGEAVDAAKVITKFADDNKALVIKGGYMDGNALSADQVEAIAKLDNRETTLAKLAGAMKGSMAKAAAVFNAPATKMVRTAAALQDKKAAEA</sequence>
<feature type="chain" id="PRO_1000195540" description="Large ribosomal subunit protein uL10">
    <location>
        <begin position="1"/>
        <end position="173"/>
    </location>
</feature>
<organism>
    <name type="scientific">Corynebacterium aurimucosum (strain ATCC 700975 / DSM 44827 / CIP 107346 / CN-1)</name>
    <name type="common">Corynebacterium nigricans</name>
    <dbReference type="NCBI Taxonomy" id="548476"/>
    <lineage>
        <taxon>Bacteria</taxon>
        <taxon>Bacillati</taxon>
        <taxon>Actinomycetota</taxon>
        <taxon>Actinomycetes</taxon>
        <taxon>Mycobacteriales</taxon>
        <taxon>Corynebacteriaceae</taxon>
        <taxon>Corynebacterium</taxon>
    </lineage>
</organism>
<proteinExistence type="inferred from homology"/>
<protein>
    <recommendedName>
        <fullName evidence="1">Large ribosomal subunit protein uL10</fullName>
    </recommendedName>
    <alternativeName>
        <fullName evidence="2">50S ribosomal protein L10</fullName>
    </alternativeName>
</protein>
<reference key="1">
    <citation type="journal article" date="2010" name="BMC Genomics">
        <title>Complete genome sequence and lifestyle of black-pigmented Corynebacterium aurimucosum ATCC 700975 (formerly C. nigricans CN-1) isolated from a vaginal swab of a woman with spontaneous abortion.</title>
        <authorList>
            <person name="Trost E."/>
            <person name="Gotker S."/>
            <person name="Schneider J."/>
            <person name="Schneiker-Bekel S."/>
            <person name="Szczepanowski R."/>
            <person name="Tilker A."/>
            <person name="Viehoever P."/>
            <person name="Arnold W."/>
            <person name="Bekel T."/>
            <person name="Blom J."/>
            <person name="Gartemann K.H."/>
            <person name="Linke B."/>
            <person name="Goesmann A."/>
            <person name="Puhler A."/>
            <person name="Shukla S.K."/>
            <person name="Tauch A."/>
        </authorList>
    </citation>
    <scope>NUCLEOTIDE SEQUENCE [LARGE SCALE GENOMIC DNA]</scope>
    <source>
        <strain>ATCC 700975 / DSM 44827 / CIP 107346 / CN-1</strain>
    </source>
</reference>
<keyword id="KW-1185">Reference proteome</keyword>
<keyword id="KW-0687">Ribonucleoprotein</keyword>
<keyword id="KW-0689">Ribosomal protein</keyword>
<keyword id="KW-0694">RNA-binding</keyword>
<keyword id="KW-0699">rRNA-binding</keyword>